<name>HEMTL_NAEFO</name>
<gene>
    <name type="primary">nfa1</name>
</gene>
<keyword id="KW-0408">Iron</keyword>
<keyword id="KW-0479">Metal-binding</keyword>
<keyword id="KW-0561">Oxygen transport</keyword>
<keyword id="KW-0813">Transport</keyword>
<protein>
    <recommendedName>
        <fullName>Hemerythrin-like protein</fullName>
    </recommendedName>
    <alternativeName>
        <fullName>ARG-1</fullName>
    </alternativeName>
</protein>
<proteinExistence type="inferred from homology"/>
<dbReference type="EMBL" id="AF230370">
    <property type="protein sequence ID" value="AAF35899.1"/>
    <property type="molecule type" value="Genomic_DNA"/>
</dbReference>
<dbReference type="SMR" id="Q9NH76"/>
<dbReference type="VEuPathDB" id="AmoebaDB:FDP41_005547"/>
<dbReference type="VEuPathDB" id="AmoebaDB:FDP41_010118"/>
<dbReference type="VEuPathDB" id="AmoebaDB:NF0127030"/>
<dbReference type="VEuPathDB" id="AmoebaDB:NfTy_067100"/>
<dbReference type="OMA" id="QIEWLDQ"/>
<dbReference type="OrthoDB" id="10249344at2759"/>
<dbReference type="GO" id="GO:0005506">
    <property type="term" value="F:iron ion binding"/>
    <property type="evidence" value="ECO:0007669"/>
    <property type="project" value="InterPro"/>
</dbReference>
<dbReference type="GO" id="GO:0005344">
    <property type="term" value="F:oxygen carrier activity"/>
    <property type="evidence" value="ECO:0007669"/>
    <property type="project" value="UniProtKB-KW"/>
</dbReference>
<dbReference type="CDD" id="cd12107">
    <property type="entry name" value="Hemerythrin"/>
    <property type="match status" value="1"/>
</dbReference>
<dbReference type="Gene3D" id="1.20.120.50">
    <property type="entry name" value="Hemerythrin-like"/>
    <property type="match status" value="1"/>
</dbReference>
<dbReference type="InterPro" id="IPR002063">
    <property type="entry name" value="Haemerythrin"/>
</dbReference>
<dbReference type="InterPro" id="IPR016131">
    <property type="entry name" value="Haemerythrin_Fe_BS"/>
</dbReference>
<dbReference type="InterPro" id="IPR050669">
    <property type="entry name" value="Hemerythrin"/>
</dbReference>
<dbReference type="InterPro" id="IPR012312">
    <property type="entry name" value="Hemerythrin-like"/>
</dbReference>
<dbReference type="InterPro" id="IPR035938">
    <property type="entry name" value="Hemerythrin-like_sf"/>
</dbReference>
<dbReference type="InterPro" id="IPR012827">
    <property type="entry name" value="Hemerythrin_metal-bd"/>
</dbReference>
<dbReference type="NCBIfam" id="NF033749">
    <property type="entry name" value="bact_hemeryth"/>
    <property type="match status" value="1"/>
</dbReference>
<dbReference type="NCBIfam" id="TIGR02481">
    <property type="entry name" value="hemeryth_dom"/>
    <property type="match status" value="1"/>
</dbReference>
<dbReference type="NCBIfam" id="TIGR00058">
    <property type="entry name" value="Hemerythrin"/>
    <property type="match status" value="1"/>
</dbReference>
<dbReference type="PANTHER" id="PTHR37164">
    <property type="entry name" value="BACTERIOHEMERYTHRIN"/>
    <property type="match status" value="1"/>
</dbReference>
<dbReference type="PANTHER" id="PTHR37164:SF1">
    <property type="entry name" value="BACTERIOHEMERYTHRIN"/>
    <property type="match status" value="1"/>
</dbReference>
<dbReference type="Pfam" id="PF01814">
    <property type="entry name" value="Hemerythrin"/>
    <property type="match status" value="1"/>
</dbReference>
<dbReference type="PIRSF" id="PIRSF002033">
    <property type="entry name" value="Hemerythrin"/>
    <property type="match status" value="1"/>
</dbReference>
<dbReference type="PRINTS" id="PR00186">
    <property type="entry name" value="HEMERYTHRIN"/>
</dbReference>
<dbReference type="SUPFAM" id="SSF47188">
    <property type="entry name" value="Hemerythrin-like"/>
    <property type="match status" value="1"/>
</dbReference>
<dbReference type="PROSITE" id="PS00550">
    <property type="entry name" value="HEMERYTHRINS"/>
    <property type="match status" value="1"/>
</dbReference>
<feature type="chain" id="PRO_0000191832" description="Hemerythrin-like protein">
    <location>
        <begin position="1"/>
        <end position="119"/>
    </location>
</feature>
<feature type="binding site" evidence="2">
    <location>
        <position position="26"/>
    </location>
    <ligand>
        <name>Fe cation</name>
        <dbReference type="ChEBI" id="CHEBI:24875"/>
        <label>1</label>
    </ligand>
</feature>
<feature type="binding site" evidence="2">
    <location>
        <position position="56"/>
    </location>
    <ligand>
        <name>Fe cation</name>
        <dbReference type="ChEBI" id="CHEBI:24875"/>
        <label>1</label>
    </ligand>
</feature>
<feature type="binding site" evidence="2">
    <location>
        <position position="60"/>
    </location>
    <ligand>
        <name>Fe cation</name>
        <dbReference type="ChEBI" id="CHEBI:24875"/>
        <label>1</label>
    </ligand>
</feature>
<feature type="binding site" evidence="2">
    <location>
        <position position="60"/>
    </location>
    <ligand>
        <name>Fe cation</name>
        <dbReference type="ChEBI" id="CHEBI:24875"/>
        <label>2</label>
    </ligand>
</feature>
<feature type="binding site" evidence="2">
    <location>
        <position position="75"/>
    </location>
    <ligand>
        <name>Fe cation</name>
        <dbReference type="ChEBI" id="CHEBI:24875"/>
        <label>2</label>
    </ligand>
</feature>
<feature type="binding site" evidence="2">
    <location>
        <position position="79"/>
    </location>
    <ligand>
        <name>Fe cation</name>
        <dbReference type="ChEBI" id="CHEBI:24875"/>
        <label>2</label>
    </ligand>
</feature>
<feature type="binding site" evidence="2">
    <location>
        <position position="107"/>
    </location>
    <ligand>
        <name>Fe cation</name>
        <dbReference type="ChEBI" id="CHEBI:24875"/>
        <label>2</label>
    </ligand>
</feature>
<feature type="binding site" evidence="2">
    <location>
        <position position="112"/>
    </location>
    <ligand>
        <name>Fe cation</name>
        <dbReference type="ChEBI" id="CHEBI:24875"/>
        <label>1</label>
    </ligand>
</feature>
<feature type="binding site" evidence="2">
    <location>
        <position position="112"/>
    </location>
    <ligand>
        <name>Fe cation</name>
        <dbReference type="ChEBI" id="CHEBI:24875"/>
        <label>2</label>
    </ligand>
</feature>
<organism>
    <name type="scientific">Naegleria fowleri</name>
    <name type="common">Brain eating amoeba</name>
    <dbReference type="NCBI Taxonomy" id="5763"/>
    <lineage>
        <taxon>Eukaryota</taxon>
        <taxon>Discoba</taxon>
        <taxon>Heterolobosea</taxon>
        <taxon>Tetramitia</taxon>
        <taxon>Eutetramitia</taxon>
        <taxon>Vahlkampfiidae</taxon>
        <taxon>Naegleria</taxon>
    </lineage>
</organism>
<accession>Q9NH76</accession>
<evidence type="ECO:0000250" key="1"/>
<evidence type="ECO:0000250" key="2">
    <source>
        <dbReference type="UniProtKB" id="P02244"/>
    </source>
</evidence>
<evidence type="ECO:0000305" key="3"/>
<sequence length="119" mass="13403">MATTIPSPFNWDSSFCVGNNELNEQHKKLFALINALDANRSSASALKELLDFVVMHFKAEEDLFAKVNFSDSTSHKETHDKFVQDALGLKTVGDAEIQFIKQWLVNHIKGSDMKYKGVL</sequence>
<comment type="function">
    <text evidence="1">Oxygen-binding protein. The oxygen-binding site contains two iron atoms (By similarity).</text>
</comment>
<comment type="similarity">
    <text evidence="3">Belongs to the hemerythrin family.</text>
</comment>
<reference key="1">
    <citation type="journal article" date="2001" name="J. Eukaryot. Microbiol.">
        <title>Molecular cloning and characterization of a gene encoding a 13.1 kDa antigenic protein of Naegleria fowleri.</title>
        <authorList>
            <person name="Shin H.-J."/>
            <person name="Cho M.-S."/>
            <person name="Jung S.-U."/>
            <person name="Kim H.-I."/>
            <person name="Park S."/>
            <person name="Kim H.-J."/>
            <person name="Im K."/>
        </authorList>
    </citation>
    <scope>NUCLEOTIDE SEQUENCE [GENOMIC DNA]</scope>
    <source>
        <strain>ATCC 30215 / Nf 69</strain>
    </source>
</reference>